<protein>
    <recommendedName>
        <fullName evidence="1">UPF0235 protein YPTB3216</fullName>
    </recommendedName>
</protein>
<evidence type="ECO:0000255" key="1">
    <source>
        <dbReference type="HAMAP-Rule" id="MF_00634"/>
    </source>
</evidence>
<reference key="1">
    <citation type="journal article" date="2004" name="Proc. Natl. Acad. Sci. U.S.A.">
        <title>Insights into the evolution of Yersinia pestis through whole-genome comparison with Yersinia pseudotuberculosis.</title>
        <authorList>
            <person name="Chain P.S.G."/>
            <person name="Carniel E."/>
            <person name="Larimer F.W."/>
            <person name="Lamerdin J."/>
            <person name="Stoutland P.O."/>
            <person name="Regala W.M."/>
            <person name="Georgescu A.M."/>
            <person name="Vergez L.M."/>
            <person name="Land M.L."/>
            <person name="Motin V.L."/>
            <person name="Brubaker R.R."/>
            <person name="Fowler J."/>
            <person name="Hinnebusch J."/>
            <person name="Marceau M."/>
            <person name="Medigue C."/>
            <person name="Simonet M."/>
            <person name="Chenal-Francisque V."/>
            <person name="Souza B."/>
            <person name="Dacheux D."/>
            <person name="Elliott J.M."/>
            <person name="Derbise A."/>
            <person name="Hauser L.J."/>
            <person name="Garcia E."/>
        </authorList>
    </citation>
    <scope>NUCLEOTIDE SEQUENCE [LARGE SCALE GENOMIC DNA]</scope>
    <source>
        <strain>IP32953</strain>
    </source>
</reference>
<gene>
    <name type="ordered locus">YPTB3216</name>
</gene>
<dbReference type="EMBL" id="BX936398">
    <property type="protein sequence ID" value="CAH22454.1"/>
    <property type="molecule type" value="Genomic_DNA"/>
</dbReference>
<dbReference type="RefSeq" id="WP_011192976.1">
    <property type="nucleotide sequence ID" value="NC_006155.1"/>
</dbReference>
<dbReference type="SMR" id="Q666N2"/>
<dbReference type="KEGG" id="ypo:BZ17_3394"/>
<dbReference type="KEGG" id="yps:YPTB3216"/>
<dbReference type="PATRIC" id="fig|273123.14.peg.3561"/>
<dbReference type="Proteomes" id="UP000001011">
    <property type="component" value="Chromosome"/>
</dbReference>
<dbReference type="GO" id="GO:0005737">
    <property type="term" value="C:cytoplasm"/>
    <property type="evidence" value="ECO:0007669"/>
    <property type="project" value="TreeGrafter"/>
</dbReference>
<dbReference type="Gene3D" id="3.30.1200.10">
    <property type="entry name" value="YggU-like"/>
    <property type="match status" value="1"/>
</dbReference>
<dbReference type="HAMAP" id="MF_00634">
    <property type="entry name" value="UPF0235"/>
    <property type="match status" value="1"/>
</dbReference>
<dbReference type="InterPro" id="IPR003746">
    <property type="entry name" value="DUF167"/>
</dbReference>
<dbReference type="InterPro" id="IPR036591">
    <property type="entry name" value="YggU-like_sf"/>
</dbReference>
<dbReference type="NCBIfam" id="TIGR00251">
    <property type="entry name" value="DUF167 family protein"/>
    <property type="match status" value="1"/>
</dbReference>
<dbReference type="NCBIfam" id="NF003466">
    <property type="entry name" value="PRK05090.1"/>
    <property type="match status" value="1"/>
</dbReference>
<dbReference type="PANTHER" id="PTHR13420">
    <property type="entry name" value="UPF0235 PROTEIN C15ORF40"/>
    <property type="match status" value="1"/>
</dbReference>
<dbReference type="PANTHER" id="PTHR13420:SF7">
    <property type="entry name" value="UPF0235 PROTEIN C15ORF40"/>
    <property type="match status" value="1"/>
</dbReference>
<dbReference type="Pfam" id="PF02594">
    <property type="entry name" value="DUF167"/>
    <property type="match status" value="1"/>
</dbReference>
<dbReference type="SMART" id="SM01152">
    <property type="entry name" value="DUF167"/>
    <property type="match status" value="1"/>
</dbReference>
<dbReference type="SUPFAM" id="SSF69786">
    <property type="entry name" value="YggU-like"/>
    <property type="match status" value="1"/>
</dbReference>
<comment type="similarity">
    <text evidence="1">Belongs to the UPF0235 family.</text>
</comment>
<sequence length="96" mass="10540">MSAVLSTENGLILKLYIQPKASRDQIVGLHGDELKVAITAPPVDGQANAHLVKFIAKQFRVAKSQVIIEKGELGRHKQIKVINPQQIPPEVTILLK</sequence>
<proteinExistence type="inferred from homology"/>
<organism>
    <name type="scientific">Yersinia pseudotuberculosis serotype I (strain IP32953)</name>
    <dbReference type="NCBI Taxonomy" id="273123"/>
    <lineage>
        <taxon>Bacteria</taxon>
        <taxon>Pseudomonadati</taxon>
        <taxon>Pseudomonadota</taxon>
        <taxon>Gammaproteobacteria</taxon>
        <taxon>Enterobacterales</taxon>
        <taxon>Yersiniaceae</taxon>
        <taxon>Yersinia</taxon>
    </lineage>
</organism>
<accession>Q666N2</accession>
<feature type="chain" id="PRO_1000056800" description="UPF0235 protein YPTB3216">
    <location>
        <begin position="1"/>
        <end position="96"/>
    </location>
</feature>
<name>Y3216_YERPS</name>